<gene>
    <name evidence="1" type="primary">galK</name>
    <name type="ordered locus">Lreu_1777</name>
</gene>
<reference key="1">
    <citation type="journal article" date="2011" name="PLoS Genet.">
        <title>The evolution of host specialization in the vertebrate gut symbiont Lactobacillus reuteri.</title>
        <authorList>
            <person name="Frese S.A."/>
            <person name="Benson A.K."/>
            <person name="Tannock G.W."/>
            <person name="Loach D.M."/>
            <person name="Kim J."/>
            <person name="Zhang M."/>
            <person name="Oh P.L."/>
            <person name="Heng N.C."/>
            <person name="Patil P.B."/>
            <person name="Juge N."/>
            <person name="Mackenzie D.A."/>
            <person name="Pearson B.M."/>
            <person name="Lapidus A."/>
            <person name="Dalin E."/>
            <person name="Tice H."/>
            <person name="Goltsman E."/>
            <person name="Land M."/>
            <person name="Hauser L."/>
            <person name="Ivanova N."/>
            <person name="Kyrpides N.C."/>
            <person name="Walter J."/>
        </authorList>
    </citation>
    <scope>NUCLEOTIDE SEQUENCE [LARGE SCALE GENOMIC DNA]</scope>
    <source>
        <strain>DSM 20016</strain>
    </source>
</reference>
<organism>
    <name type="scientific">Limosilactobacillus reuteri (strain DSM 20016)</name>
    <name type="common">Lactobacillus reuteri</name>
    <dbReference type="NCBI Taxonomy" id="557436"/>
    <lineage>
        <taxon>Bacteria</taxon>
        <taxon>Bacillati</taxon>
        <taxon>Bacillota</taxon>
        <taxon>Bacilli</taxon>
        <taxon>Lactobacillales</taxon>
        <taxon>Lactobacillaceae</taxon>
        <taxon>Limosilactobacillus</taxon>
    </lineage>
</organism>
<protein>
    <recommendedName>
        <fullName evidence="1">Galactokinase</fullName>
        <ecNumber evidence="1">2.7.1.6</ecNumber>
    </recommendedName>
    <alternativeName>
        <fullName evidence="1">Galactose kinase</fullName>
    </alternativeName>
</protein>
<sequence>MDKQQFLAEYQDVFKEPGKDVFFSPGRINVIGEHTDYNGGHVFPCAISIGTYGVYGPREDTTVAIYSANSAKEEDSKIITFDINDTEPQNAKDEKWVNYFKGMLVYLKQRGFKIDHGFNLYIHGFLPYGSGLSSSASIEMLMGNILKDEFNLDIDEIELVKLGQKTENDFVGLNSGIMDQFAVGMGKENNAIYLDCNTLEYKYLPLELGDYEIIIMSTNKNHSLAGSKYNERVQECEEAVKRLNKKLDINKLGELDSDTFDQYTYLIDDDTLIRRARHAVSENERTKKAIDAMEKGDLEELGRLINASHVSLKYDYEVTGKELDTLAENAWNQPGCLGARMVGGGFAGSAIAIVKKSEAENFKKNVGKIYRDKIGYDASFYDAEVVDGPHKL</sequence>
<feature type="chain" id="PRO_1000059005" description="Galactokinase">
    <location>
        <begin position="1"/>
        <end position="392"/>
    </location>
</feature>
<feature type="active site" description="Proton acceptor" evidence="1">
    <location>
        <position position="179"/>
    </location>
</feature>
<feature type="binding site" evidence="1">
    <location>
        <begin position="33"/>
        <end position="36"/>
    </location>
    <ligand>
        <name>substrate</name>
    </ligand>
</feature>
<feature type="binding site" evidence="1">
    <location>
        <position position="67"/>
    </location>
    <ligand>
        <name>ATP</name>
        <dbReference type="ChEBI" id="CHEBI:30616"/>
    </ligand>
</feature>
<feature type="binding site" evidence="1">
    <location>
        <begin position="129"/>
        <end position="135"/>
    </location>
    <ligand>
        <name>ATP</name>
        <dbReference type="ChEBI" id="CHEBI:30616"/>
    </ligand>
</feature>
<feature type="binding site" evidence="1">
    <location>
        <position position="135"/>
    </location>
    <ligand>
        <name>Mg(2+)</name>
        <dbReference type="ChEBI" id="CHEBI:18420"/>
    </ligand>
</feature>
<feature type="binding site" evidence="1">
    <location>
        <position position="167"/>
    </location>
    <ligand>
        <name>Mg(2+)</name>
        <dbReference type="ChEBI" id="CHEBI:18420"/>
    </ligand>
</feature>
<feature type="binding site" evidence="1">
    <location>
        <position position="229"/>
    </location>
    <ligand>
        <name>substrate</name>
    </ligand>
</feature>
<feature type="site" description="Transition state stabilizer" evidence="1">
    <location>
        <position position="27"/>
    </location>
</feature>
<evidence type="ECO:0000255" key="1">
    <source>
        <dbReference type="HAMAP-Rule" id="MF_00246"/>
    </source>
</evidence>
<dbReference type="EC" id="2.7.1.6" evidence="1"/>
<dbReference type="EMBL" id="CP000705">
    <property type="protein sequence ID" value="ABQ84016.1"/>
    <property type="molecule type" value="Genomic_DNA"/>
</dbReference>
<dbReference type="RefSeq" id="WP_011953582.1">
    <property type="nucleotide sequence ID" value="NC_009513.1"/>
</dbReference>
<dbReference type="SMR" id="A5VME2"/>
<dbReference type="STRING" id="557436.Lreu_1777"/>
<dbReference type="KEGG" id="lre:Lreu_1777"/>
<dbReference type="eggNOG" id="COG0153">
    <property type="taxonomic scope" value="Bacteria"/>
</dbReference>
<dbReference type="HOGENOM" id="CLU_017814_2_1_9"/>
<dbReference type="UniPathway" id="UPA00214"/>
<dbReference type="Proteomes" id="UP000001991">
    <property type="component" value="Chromosome"/>
</dbReference>
<dbReference type="GO" id="GO:0005829">
    <property type="term" value="C:cytosol"/>
    <property type="evidence" value="ECO:0007669"/>
    <property type="project" value="TreeGrafter"/>
</dbReference>
<dbReference type="GO" id="GO:0005524">
    <property type="term" value="F:ATP binding"/>
    <property type="evidence" value="ECO:0007669"/>
    <property type="project" value="UniProtKB-UniRule"/>
</dbReference>
<dbReference type="GO" id="GO:0004335">
    <property type="term" value="F:galactokinase activity"/>
    <property type="evidence" value="ECO:0007669"/>
    <property type="project" value="UniProtKB-UniRule"/>
</dbReference>
<dbReference type="GO" id="GO:0000287">
    <property type="term" value="F:magnesium ion binding"/>
    <property type="evidence" value="ECO:0007669"/>
    <property type="project" value="UniProtKB-UniRule"/>
</dbReference>
<dbReference type="GO" id="GO:0006012">
    <property type="term" value="P:galactose metabolic process"/>
    <property type="evidence" value="ECO:0007669"/>
    <property type="project" value="UniProtKB-UniRule"/>
</dbReference>
<dbReference type="FunFam" id="3.30.230.10:FF:000017">
    <property type="entry name" value="Galactokinase"/>
    <property type="match status" value="1"/>
</dbReference>
<dbReference type="FunFam" id="3.30.70.890:FF:000001">
    <property type="entry name" value="Galactokinase"/>
    <property type="match status" value="1"/>
</dbReference>
<dbReference type="Gene3D" id="3.30.230.10">
    <property type="match status" value="1"/>
</dbReference>
<dbReference type="Gene3D" id="3.30.70.890">
    <property type="entry name" value="GHMP kinase, C-terminal domain"/>
    <property type="match status" value="1"/>
</dbReference>
<dbReference type="HAMAP" id="MF_00246">
    <property type="entry name" value="Galactokinase"/>
    <property type="match status" value="1"/>
</dbReference>
<dbReference type="InterPro" id="IPR000705">
    <property type="entry name" value="Galactokinase"/>
</dbReference>
<dbReference type="InterPro" id="IPR022963">
    <property type="entry name" value="Galactokinase_bac"/>
</dbReference>
<dbReference type="InterPro" id="IPR019741">
    <property type="entry name" value="Galactokinase_CS"/>
</dbReference>
<dbReference type="InterPro" id="IPR019539">
    <property type="entry name" value="GalKase_N"/>
</dbReference>
<dbReference type="InterPro" id="IPR013750">
    <property type="entry name" value="GHMP_kinase_C_dom"/>
</dbReference>
<dbReference type="InterPro" id="IPR036554">
    <property type="entry name" value="GHMP_kinase_C_sf"/>
</dbReference>
<dbReference type="InterPro" id="IPR006204">
    <property type="entry name" value="GHMP_kinase_N_dom"/>
</dbReference>
<dbReference type="InterPro" id="IPR006203">
    <property type="entry name" value="GHMP_knse_ATP-bd_CS"/>
</dbReference>
<dbReference type="InterPro" id="IPR006206">
    <property type="entry name" value="Mevalonate/galactokinase"/>
</dbReference>
<dbReference type="InterPro" id="IPR020568">
    <property type="entry name" value="Ribosomal_Su5_D2-typ_SF"/>
</dbReference>
<dbReference type="InterPro" id="IPR014721">
    <property type="entry name" value="Ribsml_uS5_D2-typ_fold_subgr"/>
</dbReference>
<dbReference type="NCBIfam" id="TIGR00131">
    <property type="entry name" value="gal_kin"/>
    <property type="match status" value="1"/>
</dbReference>
<dbReference type="NCBIfam" id="NF003705">
    <property type="entry name" value="PRK05322.1"/>
    <property type="match status" value="1"/>
</dbReference>
<dbReference type="PANTHER" id="PTHR10457:SF7">
    <property type="entry name" value="GALACTOKINASE-RELATED"/>
    <property type="match status" value="1"/>
</dbReference>
<dbReference type="PANTHER" id="PTHR10457">
    <property type="entry name" value="MEVALONATE KINASE/GALACTOKINASE"/>
    <property type="match status" value="1"/>
</dbReference>
<dbReference type="Pfam" id="PF10509">
    <property type="entry name" value="GalKase_gal_bdg"/>
    <property type="match status" value="1"/>
</dbReference>
<dbReference type="Pfam" id="PF08544">
    <property type="entry name" value="GHMP_kinases_C"/>
    <property type="match status" value="1"/>
</dbReference>
<dbReference type="Pfam" id="PF00288">
    <property type="entry name" value="GHMP_kinases_N"/>
    <property type="match status" value="1"/>
</dbReference>
<dbReference type="PIRSF" id="PIRSF000530">
    <property type="entry name" value="Galactokinase"/>
    <property type="match status" value="1"/>
</dbReference>
<dbReference type="PRINTS" id="PR00473">
    <property type="entry name" value="GALCTOKINASE"/>
</dbReference>
<dbReference type="PRINTS" id="PR00959">
    <property type="entry name" value="MEVGALKINASE"/>
</dbReference>
<dbReference type="SUPFAM" id="SSF55060">
    <property type="entry name" value="GHMP Kinase, C-terminal domain"/>
    <property type="match status" value="1"/>
</dbReference>
<dbReference type="SUPFAM" id="SSF54211">
    <property type="entry name" value="Ribosomal protein S5 domain 2-like"/>
    <property type="match status" value="1"/>
</dbReference>
<dbReference type="PROSITE" id="PS00106">
    <property type="entry name" value="GALACTOKINASE"/>
    <property type="match status" value="1"/>
</dbReference>
<dbReference type="PROSITE" id="PS00627">
    <property type="entry name" value="GHMP_KINASES_ATP"/>
    <property type="match status" value="1"/>
</dbReference>
<keyword id="KW-0067">ATP-binding</keyword>
<keyword id="KW-0119">Carbohydrate metabolism</keyword>
<keyword id="KW-0963">Cytoplasm</keyword>
<keyword id="KW-0299">Galactose metabolism</keyword>
<keyword id="KW-0418">Kinase</keyword>
<keyword id="KW-0460">Magnesium</keyword>
<keyword id="KW-0479">Metal-binding</keyword>
<keyword id="KW-0547">Nucleotide-binding</keyword>
<keyword id="KW-1185">Reference proteome</keyword>
<keyword id="KW-0808">Transferase</keyword>
<accession>A5VME2</accession>
<name>GAL1_LIMRD</name>
<comment type="function">
    <text evidence="1">Catalyzes the transfer of the gamma-phosphate of ATP to D-galactose to form alpha-D-galactose-1-phosphate (Gal-1-P).</text>
</comment>
<comment type="catalytic activity">
    <reaction evidence="1">
        <text>alpha-D-galactose + ATP = alpha-D-galactose 1-phosphate + ADP + H(+)</text>
        <dbReference type="Rhea" id="RHEA:13553"/>
        <dbReference type="ChEBI" id="CHEBI:15378"/>
        <dbReference type="ChEBI" id="CHEBI:28061"/>
        <dbReference type="ChEBI" id="CHEBI:30616"/>
        <dbReference type="ChEBI" id="CHEBI:58336"/>
        <dbReference type="ChEBI" id="CHEBI:456216"/>
        <dbReference type="EC" id="2.7.1.6"/>
    </reaction>
</comment>
<comment type="pathway">
    <text evidence="1">Carbohydrate metabolism; galactose metabolism.</text>
</comment>
<comment type="subcellular location">
    <subcellularLocation>
        <location evidence="1">Cytoplasm</location>
    </subcellularLocation>
</comment>
<comment type="similarity">
    <text evidence="1">Belongs to the GHMP kinase family. GalK subfamily.</text>
</comment>
<proteinExistence type="inferred from homology"/>